<protein>
    <recommendedName>
        <fullName evidence="1">Ribonuclease PH</fullName>
        <shortName evidence="1">RNase PH</shortName>
        <ecNumber evidence="1">2.7.7.56</ecNumber>
    </recommendedName>
    <alternativeName>
        <fullName evidence="1">tRNA nucleotidyltransferase</fullName>
    </alternativeName>
</protein>
<proteinExistence type="inferred from homology"/>
<organism>
    <name type="scientific">Xanthobacter autotrophicus (strain ATCC BAA-1158 / Py2)</name>
    <dbReference type="NCBI Taxonomy" id="78245"/>
    <lineage>
        <taxon>Bacteria</taxon>
        <taxon>Pseudomonadati</taxon>
        <taxon>Pseudomonadota</taxon>
        <taxon>Alphaproteobacteria</taxon>
        <taxon>Hyphomicrobiales</taxon>
        <taxon>Xanthobacteraceae</taxon>
        <taxon>Xanthobacter</taxon>
    </lineage>
</organism>
<gene>
    <name evidence="1" type="primary">rph</name>
    <name type="ordered locus">Xaut_2535</name>
</gene>
<dbReference type="EC" id="2.7.7.56" evidence="1"/>
<dbReference type="EMBL" id="CP000781">
    <property type="protein sequence ID" value="ABS67777.1"/>
    <property type="molecule type" value="Genomic_DNA"/>
</dbReference>
<dbReference type="SMR" id="A7IID4"/>
<dbReference type="STRING" id="78245.Xaut_2535"/>
<dbReference type="KEGG" id="xau:Xaut_2535"/>
<dbReference type="eggNOG" id="COG0689">
    <property type="taxonomic scope" value="Bacteria"/>
</dbReference>
<dbReference type="HOGENOM" id="CLU_050858_0_0_5"/>
<dbReference type="OrthoDB" id="9802265at2"/>
<dbReference type="PhylomeDB" id="A7IID4"/>
<dbReference type="Proteomes" id="UP000002417">
    <property type="component" value="Chromosome"/>
</dbReference>
<dbReference type="GO" id="GO:0000175">
    <property type="term" value="F:3'-5'-RNA exonuclease activity"/>
    <property type="evidence" value="ECO:0007669"/>
    <property type="project" value="UniProtKB-UniRule"/>
</dbReference>
<dbReference type="GO" id="GO:0000049">
    <property type="term" value="F:tRNA binding"/>
    <property type="evidence" value="ECO:0007669"/>
    <property type="project" value="UniProtKB-UniRule"/>
</dbReference>
<dbReference type="GO" id="GO:0009022">
    <property type="term" value="F:tRNA nucleotidyltransferase activity"/>
    <property type="evidence" value="ECO:0007669"/>
    <property type="project" value="UniProtKB-UniRule"/>
</dbReference>
<dbReference type="GO" id="GO:0016075">
    <property type="term" value="P:rRNA catabolic process"/>
    <property type="evidence" value="ECO:0007669"/>
    <property type="project" value="UniProtKB-UniRule"/>
</dbReference>
<dbReference type="GO" id="GO:0006364">
    <property type="term" value="P:rRNA processing"/>
    <property type="evidence" value="ECO:0007669"/>
    <property type="project" value="UniProtKB-KW"/>
</dbReference>
<dbReference type="GO" id="GO:0008033">
    <property type="term" value="P:tRNA processing"/>
    <property type="evidence" value="ECO:0007669"/>
    <property type="project" value="UniProtKB-UniRule"/>
</dbReference>
<dbReference type="CDD" id="cd11362">
    <property type="entry name" value="RNase_PH_bact"/>
    <property type="match status" value="1"/>
</dbReference>
<dbReference type="FunFam" id="3.30.230.70:FF:000003">
    <property type="entry name" value="Ribonuclease PH"/>
    <property type="match status" value="1"/>
</dbReference>
<dbReference type="Gene3D" id="3.30.230.70">
    <property type="entry name" value="GHMP Kinase, N-terminal domain"/>
    <property type="match status" value="1"/>
</dbReference>
<dbReference type="HAMAP" id="MF_00564">
    <property type="entry name" value="RNase_PH"/>
    <property type="match status" value="1"/>
</dbReference>
<dbReference type="InterPro" id="IPR001247">
    <property type="entry name" value="ExoRNase_PH_dom1"/>
</dbReference>
<dbReference type="InterPro" id="IPR015847">
    <property type="entry name" value="ExoRNase_PH_dom2"/>
</dbReference>
<dbReference type="InterPro" id="IPR036345">
    <property type="entry name" value="ExoRNase_PH_dom2_sf"/>
</dbReference>
<dbReference type="InterPro" id="IPR027408">
    <property type="entry name" value="PNPase/RNase_PH_dom_sf"/>
</dbReference>
<dbReference type="InterPro" id="IPR020568">
    <property type="entry name" value="Ribosomal_Su5_D2-typ_SF"/>
</dbReference>
<dbReference type="InterPro" id="IPR050080">
    <property type="entry name" value="RNase_PH"/>
</dbReference>
<dbReference type="InterPro" id="IPR002381">
    <property type="entry name" value="RNase_PH_bac-type"/>
</dbReference>
<dbReference type="InterPro" id="IPR018336">
    <property type="entry name" value="RNase_PH_CS"/>
</dbReference>
<dbReference type="NCBIfam" id="TIGR01966">
    <property type="entry name" value="RNasePH"/>
    <property type="match status" value="1"/>
</dbReference>
<dbReference type="PANTHER" id="PTHR11953">
    <property type="entry name" value="EXOSOME COMPLEX COMPONENT"/>
    <property type="match status" value="1"/>
</dbReference>
<dbReference type="PANTHER" id="PTHR11953:SF0">
    <property type="entry name" value="EXOSOME COMPLEX COMPONENT RRP41"/>
    <property type="match status" value="1"/>
</dbReference>
<dbReference type="Pfam" id="PF01138">
    <property type="entry name" value="RNase_PH"/>
    <property type="match status" value="1"/>
</dbReference>
<dbReference type="Pfam" id="PF03725">
    <property type="entry name" value="RNase_PH_C"/>
    <property type="match status" value="1"/>
</dbReference>
<dbReference type="SUPFAM" id="SSF55666">
    <property type="entry name" value="Ribonuclease PH domain 2-like"/>
    <property type="match status" value="1"/>
</dbReference>
<dbReference type="SUPFAM" id="SSF54211">
    <property type="entry name" value="Ribosomal protein S5 domain 2-like"/>
    <property type="match status" value="1"/>
</dbReference>
<dbReference type="PROSITE" id="PS01277">
    <property type="entry name" value="RIBONUCLEASE_PH"/>
    <property type="match status" value="1"/>
</dbReference>
<reference key="1">
    <citation type="submission" date="2007-07" db="EMBL/GenBank/DDBJ databases">
        <title>Complete sequence of chromosome of Xanthobacter autotrophicus Py2.</title>
        <authorList>
            <consortium name="US DOE Joint Genome Institute"/>
            <person name="Copeland A."/>
            <person name="Lucas S."/>
            <person name="Lapidus A."/>
            <person name="Barry K."/>
            <person name="Glavina del Rio T."/>
            <person name="Hammon N."/>
            <person name="Israni S."/>
            <person name="Dalin E."/>
            <person name="Tice H."/>
            <person name="Pitluck S."/>
            <person name="Sims D."/>
            <person name="Brettin T."/>
            <person name="Bruce D."/>
            <person name="Detter J.C."/>
            <person name="Han C."/>
            <person name="Tapia R."/>
            <person name="Brainard J."/>
            <person name="Schmutz J."/>
            <person name="Larimer F."/>
            <person name="Land M."/>
            <person name="Hauser L."/>
            <person name="Kyrpides N."/>
            <person name="Kim E."/>
            <person name="Ensigns S.A."/>
            <person name="Richardson P."/>
        </authorList>
    </citation>
    <scope>NUCLEOTIDE SEQUENCE [LARGE SCALE GENOMIC DNA]</scope>
    <source>
        <strain>ATCC BAA-1158 / Py2</strain>
    </source>
</reference>
<evidence type="ECO:0000255" key="1">
    <source>
        <dbReference type="HAMAP-Rule" id="MF_00564"/>
    </source>
</evidence>
<accession>A7IID4</accession>
<comment type="function">
    <text evidence="1">Phosphorolytic 3'-5' exoribonuclease that plays an important role in tRNA 3'-end maturation. Removes nucleotide residues following the 3'-CCA terminus of tRNAs; can also add nucleotides to the ends of RNA molecules by using nucleoside diphosphates as substrates, but this may not be physiologically important. Probably plays a role in initiation of 16S rRNA degradation (leading to ribosome degradation) during starvation.</text>
</comment>
<comment type="catalytic activity">
    <reaction evidence="1">
        <text>tRNA(n+1) + phosphate = tRNA(n) + a ribonucleoside 5'-diphosphate</text>
        <dbReference type="Rhea" id="RHEA:10628"/>
        <dbReference type="Rhea" id="RHEA-COMP:17343"/>
        <dbReference type="Rhea" id="RHEA-COMP:17344"/>
        <dbReference type="ChEBI" id="CHEBI:43474"/>
        <dbReference type="ChEBI" id="CHEBI:57930"/>
        <dbReference type="ChEBI" id="CHEBI:173114"/>
        <dbReference type="EC" id="2.7.7.56"/>
    </reaction>
</comment>
<comment type="subunit">
    <text evidence="1">Homohexameric ring arranged as a trimer of dimers.</text>
</comment>
<comment type="similarity">
    <text evidence="1">Belongs to the RNase PH family.</text>
</comment>
<keyword id="KW-0548">Nucleotidyltransferase</keyword>
<keyword id="KW-1185">Reference proteome</keyword>
<keyword id="KW-0694">RNA-binding</keyword>
<keyword id="KW-0698">rRNA processing</keyword>
<keyword id="KW-0808">Transferase</keyword>
<keyword id="KW-0819">tRNA processing</keyword>
<keyword id="KW-0820">tRNA-binding</keyword>
<name>RNPH_XANP2</name>
<feature type="chain" id="PRO_1000129388" description="Ribonuclease PH">
    <location>
        <begin position="1"/>
        <end position="237"/>
    </location>
</feature>
<feature type="binding site" evidence="1">
    <location>
        <position position="86"/>
    </location>
    <ligand>
        <name>phosphate</name>
        <dbReference type="ChEBI" id="CHEBI:43474"/>
        <note>substrate</note>
    </ligand>
</feature>
<feature type="binding site" evidence="1">
    <location>
        <begin position="124"/>
        <end position="126"/>
    </location>
    <ligand>
        <name>phosphate</name>
        <dbReference type="ChEBI" id="CHEBI:43474"/>
        <note>substrate</note>
    </ligand>
</feature>
<sequence length="237" mass="25850">MRPSKRAADEMRAVSFERGVMRHAEGSCLVKFGDTHVLVSATLEERLPPWLKGQGRGWVTAEYSMLPRATHDRTRRESTTGKQSGRTQEIQRLIGRSLRSVTDLVALGEKQITLDCDVLQADGGTRTAAITGAWIALYDCLSWMRQRSMVKEIPLKDHVAAVSCGIYNGTPVLDLDYAEDSVAETDANFVMTGTGGIVEIQGTAEKTPFSQDELLGLLSLARSGVEKLVGLQKLAVG</sequence>